<evidence type="ECO:0000250" key="1"/>
<evidence type="ECO:0000255" key="2">
    <source>
        <dbReference type="PROSITE-ProRule" id="PRU01364"/>
    </source>
</evidence>
<evidence type="ECO:0000256" key="3">
    <source>
        <dbReference type="SAM" id="MobiDB-lite"/>
    </source>
</evidence>
<evidence type="ECO:0000305" key="4"/>
<comment type="function">
    <text evidence="1">Implicated in enhancement of V-sense gene expression. Acts a an inhibitor of C-sense gene transcription (By similarity).</text>
</comment>
<comment type="cofactor">
    <cofactor evidence="2">
        <name>Mg(2+)</name>
        <dbReference type="ChEBI" id="CHEBI:18420"/>
    </cofactor>
    <cofactor evidence="2">
        <name>Mn(2+)</name>
        <dbReference type="ChEBI" id="CHEBI:29035"/>
    </cofactor>
    <text evidence="2">Divalent metal cations, possibly Mg(2+) or Mn(2+).</text>
</comment>
<comment type="subunit">
    <text evidence="1">Homooligomer. Interacts (via LXCXE domain) with host retinoblastoma-related protein 1 (RBR1), and may thereby deregulate the host cell cycle. Part of the C- and V-complexes which are RepA-Rep-DNA complexes involved in the c-sense and v-sense transcription (By similarity).</text>
</comment>
<comment type="subcellular location">
    <subcellularLocation>
        <location evidence="1">Host nucleus</location>
    </subcellularLocation>
    <subcellularLocation>
        <location evidence="1">Host cytoplasm</location>
    </subcellularLocation>
</comment>
<comment type="alternative products">
    <event type="alternative splicing"/>
    <isoform>
        <id>Q9IGY6-1</id>
        <name>RepA</name>
        <sequence type="displayed"/>
    </isoform>
    <isoform>
        <id>Q9IGY7-1</id>
        <name>Rep</name>
        <sequence type="external"/>
    </isoform>
</comment>
<comment type="domain">
    <text>There are 3 rolling circle replication (RCR) motifs. RCR-2 may be involved in metal coordination. RCR-3 is required for phosphodiester bond cleavage for initiation of RCR.</text>
</comment>
<comment type="domain">
    <text evidence="1">The LXCXE motif specifically binds to host RBR1.</text>
</comment>
<comment type="miscellaneous">
    <molecule>Isoform RepA</molecule>
    <text>Produced from the unspliced transcript.</text>
</comment>
<comment type="similarity">
    <text evidence="4">Belongs to the geminiviridae Rep protein family.</text>
</comment>
<keyword id="KW-0010">Activator</keyword>
<keyword id="KW-0025">Alternative splicing</keyword>
<keyword id="KW-0190">Covalent protein-DNA linkage</keyword>
<keyword id="KW-0235">DNA replication</keyword>
<keyword id="KW-0238">DNA-binding</keyword>
<keyword id="KW-0255">Endonuclease</keyword>
<keyword id="KW-1078">G1/S host cell cycle checkpoint dysregulation by virus</keyword>
<keyword id="KW-1035">Host cytoplasm</keyword>
<keyword id="KW-1048">Host nucleus</keyword>
<keyword id="KW-0945">Host-virus interaction</keyword>
<keyword id="KW-0378">Hydrolase</keyword>
<keyword id="KW-0479">Metal-binding</keyword>
<keyword id="KW-1121">Modulation of host cell cycle by virus</keyword>
<keyword id="KW-0540">Nuclease</keyword>
<keyword id="KW-0547">Nucleotide-binding</keyword>
<keyword id="KW-0548">Nucleotidyltransferase</keyword>
<keyword id="KW-0678">Repressor</keyword>
<keyword id="KW-0808">Transferase</keyword>
<sequence>MASSSSNRQFSHRNVNTFLTYPHCPENPEIVCQMIWELVGRWTPKYIICAQEAHKDGDMHLHALLQTEKPVRITDSRFFDIEGFHPNIQSAKSVNKVRDYILKEPLAVFERGTFIPRKSSFQGNPSKGNSEKKPSKDEIMREIISHSTSKLEYLSMIRKEFPYDWATKLQYFEYSANKLFPEIQEEFISPHPPSSPDLLCNESIKDWLQPNIFQVSPESYMLLQPTCYTLEDAISDLEWMDKLSSQQMKEQESRASTSSVQQELGNLLGPEA</sequence>
<proteinExistence type="inferred from homology"/>
<gene>
    <name type="ORF">C1</name>
</gene>
<accession>Q9IGY6</accession>
<accession>Q9YPY5</accession>
<organismHost>
    <name type="scientific">Avena sativa</name>
    <name type="common">Oat</name>
    <dbReference type="NCBI Taxonomy" id="4498"/>
</organismHost>
<organismHost>
    <name type="scientific">Axonopus compressus</name>
    <dbReference type="NCBI Taxonomy" id="217170"/>
</organismHost>
<organismHost>
    <name type="scientific">Cenchrus americanus</name>
    <name type="common">Pearl millet</name>
    <name type="synonym">Pennisetum glaucum</name>
    <dbReference type="NCBI Taxonomy" id="4543"/>
</organismHost>
<organismHost>
    <name type="scientific">Cenchrus polystachios</name>
    <dbReference type="NCBI Taxonomy" id="281129"/>
</organismHost>
<organismHost>
    <name type="scientific">Coix lacryma-jobi</name>
    <name type="common">Job's tears</name>
    <dbReference type="NCBI Taxonomy" id="4505"/>
</organismHost>
<organismHost>
    <name type="scientific">Dactyloctenium aegyptium</name>
    <dbReference type="NCBI Taxonomy" id="270102"/>
</organismHost>
<organismHost>
    <name type="scientific">Digitaria</name>
    <dbReference type="NCBI Taxonomy" id="66017"/>
</organismHost>
<organismHost>
    <name type="scientific">Echinochloa colona</name>
    <dbReference type="NCBI Taxonomy" id="90396"/>
</organismHost>
<organismHost>
    <name type="scientific">Eleusine coracana</name>
    <name type="common">Indian finger millet</name>
    <name type="synonym">Ragi</name>
    <dbReference type="NCBI Taxonomy" id="4511"/>
</organismHost>
<organismHost>
    <name type="scientific">Eleusine indica</name>
    <name type="common">Goosegrass</name>
    <name type="synonym">Cynosurus indicus</name>
    <dbReference type="NCBI Taxonomy" id="29674"/>
</organismHost>
<organismHost>
    <name type="scientific">Hordeum vulgare</name>
    <name type="common">Barley</name>
    <dbReference type="NCBI Taxonomy" id="4513"/>
</organismHost>
<organismHost>
    <name type="scientific">Megathyrsus maximus</name>
    <dbReference type="NCBI Taxonomy" id="59788"/>
</organismHost>
<organismHost>
    <name type="scientific">Melinis repens</name>
    <name type="common">Red Natal grass</name>
    <name type="synonym">Rhynchelytrum repens</name>
    <dbReference type="NCBI Taxonomy" id="29709"/>
</organismHost>
<organismHost>
    <name type="scientific">Oryza glaberrima</name>
    <name type="common">African rice</name>
    <dbReference type="NCBI Taxonomy" id="4538"/>
</organismHost>
<organismHost>
    <name type="scientific">Oryza sativa</name>
    <name type="common">Rice</name>
    <dbReference type="NCBI Taxonomy" id="4530"/>
</organismHost>
<organismHost>
    <name type="scientific">Paspalum conjugatum</name>
    <name type="common">Hilo grass</name>
    <dbReference type="NCBI Taxonomy" id="158143"/>
</organismHost>
<organismHost>
    <name type="scientific">Paspalum notatum</name>
    <name type="common">Bahia grass</name>
    <dbReference type="NCBI Taxonomy" id="147272"/>
</organismHost>
<organismHost>
    <name type="scientific">Paspalum scrobiculatum</name>
    <dbReference type="NCBI Taxonomy" id="173849"/>
</organismHost>
<organismHost>
    <name type="scientific">Rottboellia cochinchinensis</name>
    <dbReference type="NCBI Taxonomy" id="300125"/>
</organismHost>
<organismHost>
    <name type="scientific">Saccharum officinarum</name>
    <name type="common">Sugarcane</name>
    <dbReference type="NCBI Taxonomy" id="4547"/>
</organismHost>
<organismHost>
    <name type="scientific">Setaria barbata</name>
    <dbReference type="NCBI Taxonomy" id="192628"/>
</organismHost>
<organismHost>
    <name type="scientific">Triticum aestivum</name>
    <name type="common">Wheat</name>
    <dbReference type="NCBI Taxonomy" id="4565"/>
</organismHost>
<organismHost>
    <name type="scientific">Urochloa deflexa</name>
    <dbReference type="NCBI Taxonomy" id="240436"/>
</organismHost>
<organismHost>
    <name type="scientific">Zea mays</name>
    <name type="common">Maize</name>
    <dbReference type="NCBI Taxonomy" id="4577"/>
</organismHost>
<protein>
    <recommendedName>
        <fullName>Replication-associated protein A</fullName>
        <shortName>RepA</shortName>
        <ecNumber>3.1.21.-</ecNumber>
    </recommendedName>
</protein>
<dbReference type="EC" id="3.1.21.-"/>
<dbReference type="EMBL" id="AF239962">
    <property type="protein sequence ID" value="AAF97763.1"/>
    <property type="molecule type" value="Genomic_DNA"/>
</dbReference>
<dbReference type="EMBL" id="AJ012636">
    <property type="protein sequence ID" value="CAA10086.1"/>
    <property type="molecule type" value="Genomic_DNA"/>
</dbReference>
<dbReference type="SMR" id="Q9IGY6"/>
<dbReference type="Proteomes" id="UP000007782">
    <property type="component" value="Segment"/>
</dbReference>
<dbReference type="GO" id="GO:0030430">
    <property type="term" value="C:host cell cytoplasm"/>
    <property type="evidence" value="ECO:0007669"/>
    <property type="project" value="UniProtKB-SubCell"/>
</dbReference>
<dbReference type="GO" id="GO:0042025">
    <property type="term" value="C:host cell nucleus"/>
    <property type="evidence" value="ECO:0007669"/>
    <property type="project" value="UniProtKB-SubCell"/>
</dbReference>
<dbReference type="GO" id="GO:0003677">
    <property type="term" value="F:DNA binding"/>
    <property type="evidence" value="ECO:0007669"/>
    <property type="project" value="UniProtKB-KW"/>
</dbReference>
<dbReference type="GO" id="GO:0016888">
    <property type="term" value="F:endodeoxyribonuclease activity, producing 5'-phosphomonoesters"/>
    <property type="evidence" value="ECO:0007669"/>
    <property type="project" value="InterPro"/>
</dbReference>
<dbReference type="GO" id="GO:0046872">
    <property type="term" value="F:metal ion binding"/>
    <property type="evidence" value="ECO:0007669"/>
    <property type="project" value="UniProtKB-KW"/>
</dbReference>
<dbReference type="GO" id="GO:0000166">
    <property type="term" value="F:nucleotide binding"/>
    <property type="evidence" value="ECO:0007669"/>
    <property type="project" value="UniProtKB-KW"/>
</dbReference>
<dbReference type="GO" id="GO:0016779">
    <property type="term" value="F:nucleotidyltransferase activity"/>
    <property type="evidence" value="ECO:0007669"/>
    <property type="project" value="UniProtKB-KW"/>
</dbReference>
<dbReference type="GO" id="GO:0005198">
    <property type="term" value="F:structural molecule activity"/>
    <property type="evidence" value="ECO:0007669"/>
    <property type="project" value="InterPro"/>
</dbReference>
<dbReference type="GO" id="GO:0006260">
    <property type="term" value="P:DNA replication"/>
    <property type="evidence" value="ECO:0007669"/>
    <property type="project" value="UniProtKB-KW"/>
</dbReference>
<dbReference type="GO" id="GO:0039645">
    <property type="term" value="P:symbiont-mediated perturbation of host cell cycle G1/S transition checkpoint"/>
    <property type="evidence" value="ECO:0007669"/>
    <property type="project" value="UniProtKB-KW"/>
</dbReference>
<dbReference type="Gene3D" id="3.40.1310.20">
    <property type="match status" value="1"/>
</dbReference>
<dbReference type="InterPro" id="IPR049912">
    <property type="entry name" value="CRESS_DNA_REP"/>
</dbReference>
<dbReference type="InterPro" id="IPR001146">
    <property type="entry name" value="Gemini_AL1_MSV"/>
</dbReference>
<dbReference type="InterPro" id="IPR001191">
    <property type="entry name" value="Gemini_AL1_REP"/>
</dbReference>
<dbReference type="InterPro" id="IPR022692">
    <property type="entry name" value="Gemini_AL1_REP_central"/>
</dbReference>
<dbReference type="Pfam" id="PF00799">
    <property type="entry name" value="Gemini_AL1"/>
    <property type="match status" value="1"/>
</dbReference>
<dbReference type="Pfam" id="PF08283">
    <property type="entry name" value="Gemini_AL1_M"/>
    <property type="match status" value="1"/>
</dbReference>
<dbReference type="PRINTS" id="PR00227">
    <property type="entry name" value="GEMCOATAL1"/>
</dbReference>
<dbReference type="PRINTS" id="PR00229">
    <property type="entry name" value="GEMCOATMSVL1"/>
</dbReference>
<dbReference type="SUPFAM" id="SSF55464">
    <property type="entry name" value="Origin of replication-binding domain, RBD-like"/>
    <property type="match status" value="1"/>
</dbReference>
<dbReference type="PROSITE" id="PS52020">
    <property type="entry name" value="CRESS_DNA_REP"/>
    <property type="match status" value="1"/>
</dbReference>
<feature type="chain" id="PRO_0000316933" description="Replication-associated protein A">
    <location>
        <begin position="1"/>
        <end position="272"/>
    </location>
</feature>
<feature type="domain" description="CRESS-DNA virus Rep endonuclease" evidence="2">
    <location>
        <begin position="11"/>
        <end position="114"/>
    </location>
</feature>
<feature type="region of interest" description="Disordered" evidence="3">
    <location>
        <begin position="119"/>
        <end position="138"/>
    </location>
</feature>
<feature type="region of interest" description="Oligomerization" evidence="1">
    <location>
        <begin position="175"/>
        <end position="187"/>
    </location>
</feature>
<feature type="region of interest" description="Transactivation" evidence="1">
    <location>
        <begin position="221"/>
        <end position="230"/>
    </location>
</feature>
<feature type="region of interest" description="Disordered" evidence="3">
    <location>
        <begin position="245"/>
        <end position="272"/>
    </location>
</feature>
<feature type="short sequence motif" description="RCR-1" evidence="2">
    <location>
        <begin position="18"/>
        <end position="21"/>
    </location>
</feature>
<feature type="short sequence motif" description="RCR-2" evidence="2">
    <location>
        <begin position="60"/>
        <end position="62"/>
    </location>
</feature>
<feature type="short sequence motif" description="RCR-3" evidence="2">
    <location>
        <begin position="100"/>
        <end position="103"/>
    </location>
</feature>
<feature type="short sequence motif" description="LXCXE motif, interaction with host RBR1" evidence="1">
    <location>
        <begin position="198"/>
        <end position="202"/>
    </location>
</feature>
<feature type="compositionally biased region" description="Polar residues" evidence="3">
    <location>
        <begin position="119"/>
        <end position="128"/>
    </location>
</feature>
<feature type="compositionally biased region" description="Basic and acidic residues" evidence="3">
    <location>
        <begin position="129"/>
        <end position="138"/>
    </location>
</feature>
<feature type="compositionally biased region" description="Polar residues" evidence="3">
    <location>
        <begin position="245"/>
        <end position="264"/>
    </location>
</feature>
<feature type="active site" description="For DNA cleavage activity" evidence="2">
    <location>
        <position position="100"/>
    </location>
</feature>
<feature type="binding site" evidence="2">
    <location>
        <position position="52"/>
    </location>
    <ligand>
        <name>a divalent metal cation</name>
        <dbReference type="ChEBI" id="CHEBI:60240"/>
    </ligand>
</feature>
<feature type="binding site" evidence="2">
    <location>
        <position position="60"/>
    </location>
    <ligand>
        <name>a divalent metal cation</name>
        <dbReference type="ChEBI" id="CHEBI:60240"/>
    </ligand>
</feature>
<feature type="binding site" evidence="2">
    <location>
        <position position="62"/>
    </location>
    <ligand>
        <name>a divalent metal cation</name>
        <dbReference type="ChEBI" id="CHEBI:60240"/>
    </ligand>
</feature>
<feature type="binding site" evidence="2">
    <location>
        <position position="104"/>
    </location>
    <ligand>
        <name>a divalent metal cation</name>
        <dbReference type="ChEBI" id="CHEBI:60240"/>
    </ligand>
</feature>
<organism>
    <name type="scientific">Maize streak virus genotype B (isolate Tas)</name>
    <name type="common">MSV</name>
    <dbReference type="NCBI Taxonomy" id="268409"/>
    <lineage>
        <taxon>Viruses</taxon>
        <taxon>Monodnaviria</taxon>
        <taxon>Shotokuvirae</taxon>
        <taxon>Cressdnaviricota</taxon>
        <taxon>Repensiviricetes</taxon>
        <taxon>Geplafuvirales</taxon>
        <taxon>Geminiviridae</taxon>
        <taxon>Mastrevirus</taxon>
        <taxon>Maize streak virus</taxon>
    </lineage>
</organism>
<reference key="1">
    <citation type="submission" date="2000-03" db="EMBL/GenBank/DDBJ databases">
        <title>Characterization of three maize streak viruses.</title>
        <authorList>
            <person name="Willment J.A."/>
            <person name="Martin D.P."/>
            <person name="Rybicki E.P."/>
        </authorList>
    </citation>
    <scope>NUCLEOTIDE SEQUENCE [GENOMIC DNA]</scope>
</reference>
<reference key="2">
    <citation type="journal article" date="2001" name="J. Virol. Methods">
        <title>Analysis of the diversity of African streak mastreviruses using PCR-generated RFLPs and partial sequence data.</title>
        <authorList>
            <person name="Willment J.A."/>
            <person name="Martin D.P."/>
            <person name="Rybicki E.P."/>
        </authorList>
    </citation>
    <scope>NUCLEOTIDE SEQUENCE [GENOMIC DNA] OF 1-261</scope>
</reference>
<name>REPA_MSVTA</name>